<evidence type="ECO:0000250" key="1"/>
<evidence type="ECO:0000255" key="2"/>
<evidence type="ECO:0000256" key="3">
    <source>
        <dbReference type="SAM" id="MobiDB-lite"/>
    </source>
</evidence>
<evidence type="ECO:0000305" key="4"/>
<proteinExistence type="evidence at transcript level"/>
<organism>
    <name type="scientific">Xenopus tropicalis</name>
    <name type="common">Western clawed frog</name>
    <name type="synonym">Silurana tropicalis</name>
    <dbReference type="NCBI Taxonomy" id="8364"/>
    <lineage>
        <taxon>Eukaryota</taxon>
        <taxon>Metazoa</taxon>
        <taxon>Chordata</taxon>
        <taxon>Craniata</taxon>
        <taxon>Vertebrata</taxon>
        <taxon>Euteleostomi</taxon>
        <taxon>Amphibia</taxon>
        <taxon>Batrachia</taxon>
        <taxon>Anura</taxon>
        <taxon>Pipoidea</taxon>
        <taxon>Pipidae</taxon>
        <taxon>Xenopodinae</taxon>
        <taxon>Xenopus</taxon>
        <taxon>Silurana</taxon>
    </lineage>
</organism>
<sequence length="522" mass="58376">MSEAEPVGEKGPAEDDGEESVPFNPFLHEFEPEGFWQKARFYILGFTLFPLRFLLAAIFLFLMWPIAALRVAGLTEEELSRSIRHRRTILHHLIYLLSRTMFFMCGFHWITIRGRRAPASEAPLLVVAPHSTFFDPIVTVVCDLPSVVSRVENLNIPVIGALLRFNQSILVSRQDPSSRKKVVEEVKKRATSNGDWPQVLFFPEGTNGNGKVLLKFKPGAFVAGVPVQPVLMRYPNKLPATIWTWKGNGVFKVLWLTMSQFYINLEIEFLPVYHPTAEERADPTLYASKVQKIMADALAKPATEFELIGDTPVTPVGHLKVALDPKIWELGNILEKAGFSLDSVQGLIDLCLEGVCSRVGLDELAEKLGVTQHDVISRVFNYFHKDASGMIDFREVSLVLAAQDATRSAEELAKLAFDLFSTCDADGRFLLSADGFAAILRSVVGSPPAESGKVFSELCTYTELHGLTQDGFVRFAIRHPCYRHLFLFYLRPPSSGRRKPPHIQQNGGCSGKNNPRNQSKMD</sequence>
<reference key="1">
    <citation type="submission" date="2006-03" db="EMBL/GenBank/DDBJ databases">
        <authorList>
            <consortium name="Sanger Xenopus tropicalis EST/cDNA project"/>
        </authorList>
    </citation>
    <scope>NUCLEOTIDE SEQUENCE [LARGE SCALE MRNA]</scope>
    <source>
        <tissue>Egg</tissue>
    </source>
</reference>
<reference key="2">
    <citation type="submission" date="2005-01" db="EMBL/GenBank/DDBJ databases">
        <authorList>
            <consortium name="NIH - Xenopus Gene Collection (XGC) project"/>
        </authorList>
    </citation>
    <scope>NUCLEOTIDE SEQUENCE [LARGE SCALE MRNA] OF 4-522</scope>
</reference>
<comment type="function">
    <text evidence="1">Displays acyl-CoA-dependent lysophospholipid acyltransferase activity with a subset of lysophospholipids as substrates. Prefers long chain acyl-CoAs (C16, C18) as acyl donors (By similarity).</text>
</comment>
<comment type="catalytic activity">
    <reaction>
        <text>a 1-acyl-sn-glycero-3-phosphoethanolamine + an acyl-CoA = a 1,2-diacyl-sn-glycero-3-phosphoethanolamine + CoA</text>
        <dbReference type="Rhea" id="RHEA:32995"/>
        <dbReference type="ChEBI" id="CHEBI:57287"/>
        <dbReference type="ChEBI" id="CHEBI:58342"/>
        <dbReference type="ChEBI" id="CHEBI:64381"/>
        <dbReference type="ChEBI" id="CHEBI:64612"/>
        <dbReference type="EC" id="2.3.1.n7"/>
    </reaction>
</comment>
<comment type="catalytic activity">
    <reaction>
        <text>a 1-O-(1Z-alkenyl)-sn-glycero-3-phosphoethanolamine + an acyl-CoA = a 1-O-(1Z-alkenyl)-2-acyl-sn-glycero-3-phosphoethanolamine + CoA</text>
        <dbReference type="Rhea" id="RHEA:16245"/>
        <dbReference type="ChEBI" id="CHEBI:57287"/>
        <dbReference type="ChEBI" id="CHEBI:58342"/>
        <dbReference type="ChEBI" id="CHEBI:77288"/>
        <dbReference type="ChEBI" id="CHEBI:77290"/>
        <dbReference type="EC" id="2.3.1.121"/>
    </reaction>
</comment>
<comment type="catalytic activity">
    <reaction>
        <text>a 1-acyl-sn-glycero-3-phosphocholine + an acyl-CoA = a 1,2-diacyl-sn-glycero-3-phosphocholine + CoA</text>
        <dbReference type="Rhea" id="RHEA:12937"/>
        <dbReference type="ChEBI" id="CHEBI:57287"/>
        <dbReference type="ChEBI" id="CHEBI:57643"/>
        <dbReference type="ChEBI" id="CHEBI:58168"/>
        <dbReference type="ChEBI" id="CHEBI:58342"/>
        <dbReference type="EC" id="2.3.1.23"/>
    </reaction>
</comment>
<comment type="catalytic activity">
    <reaction>
        <text>a 1-O-alkyl-sn-glycero-3-phosphocholine + acetyl-CoA = a 1-O-alkyl-2-acetyl-sn-glycero-3-phosphocholine + CoA</text>
        <dbReference type="Rhea" id="RHEA:18461"/>
        <dbReference type="ChEBI" id="CHEBI:30909"/>
        <dbReference type="ChEBI" id="CHEBI:36707"/>
        <dbReference type="ChEBI" id="CHEBI:57287"/>
        <dbReference type="ChEBI" id="CHEBI:57288"/>
        <dbReference type="EC" id="2.3.1.67"/>
    </reaction>
</comment>
<comment type="catalytic activity">
    <reaction>
        <text>a 1-acyl-sn-glycero-3-phospho-L-serine + an acyl-CoA = a 1,2-diacyl-sn-glycero-3-phospho-L-serine + CoA</text>
        <dbReference type="Rhea" id="RHEA:33191"/>
        <dbReference type="ChEBI" id="CHEBI:57262"/>
        <dbReference type="ChEBI" id="CHEBI:57287"/>
        <dbReference type="ChEBI" id="CHEBI:58342"/>
        <dbReference type="ChEBI" id="CHEBI:64379"/>
        <dbReference type="EC" id="2.3.1.n6"/>
    </reaction>
</comment>
<comment type="pathway">
    <text>Lipid metabolism; phospholipid metabolism.</text>
</comment>
<comment type="subcellular location">
    <subcellularLocation>
        <location evidence="1">Endoplasmic reticulum membrane</location>
        <topology evidence="1">Multi-pass membrane protein</topology>
    </subcellularLocation>
</comment>
<comment type="similarity">
    <text evidence="4">Belongs to the 1-acyl-sn-glycerol-3-phosphate acyltransferase family.</text>
</comment>
<name>LPCT4_XENTR</name>
<protein>
    <recommendedName>
        <fullName>Lysophospholipid acyltransferase LPCAT4</fullName>
    </recommendedName>
    <alternativeName>
        <fullName>1-acylglycerol-3-phosphate O-acyltransferase 7</fullName>
        <shortName>1-AGP acyltransferase 7</shortName>
        <shortName>1-AGPAT 7</shortName>
    </alternativeName>
    <alternativeName>
        <fullName>1-acylglycerophosphocholine O-acyltransferase</fullName>
        <ecNumber>2.3.1.23</ecNumber>
    </alternativeName>
    <alternativeName>
        <fullName>1-acylglycerophosphoserine O-acyltransferase</fullName>
        <ecNumber>2.3.1.n6</ecNumber>
    </alternativeName>
    <alternativeName>
        <fullName>1-alkenylglycerophosphoethanolamine O-acyltransferase</fullName>
        <ecNumber>2.3.1.121</ecNumber>
    </alternativeName>
    <alternativeName>
        <fullName>1-alkylglycerophosphocholine O-acetyltransferase</fullName>
        <ecNumber>2.3.1.67</ecNumber>
    </alternativeName>
    <alternativeName>
        <fullName>Acyltransferase-like 3</fullName>
    </alternativeName>
    <alternativeName>
        <fullName>Lysophosphatidylcholine acyltransferase 4</fullName>
    </alternativeName>
    <alternativeName>
        <fullName>Lysophosphatidylethanolamine acyltransferase 2</fullName>
        <ecNumber>2.3.1.n7</ecNumber>
    </alternativeName>
</protein>
<feature type="chain" id="PRO_0000247057" description="Lysophospholipid acyltransferase LPCAT4">
    <location>
        <begin position="1"/>
        <end position="522"/>
    </location>
</feature>
<feature type="transmembrane region" description="Helical" evidence="2">
    <location>
        <begin position="43"/>
        <end position="63"/>
    </location>
</feature>
<feature type="transmembrane region" description="Helical" evidence="2">
    <location>
        <begin position="92"/>
        <end position="112"/>
    </location>
</feature>
<feature type="region of interest" description="Disordered" evidence="3">
    <location>
        <begin position="496"/>
        <end position="522"/>
    </location>
</feature>
<feature type="short sequence motif" description="HXXXXD motif">
    <location>
        <begin position="130"/>
        <end position="135"/>
    </location>
</feature>
<feature type="compositionally biased region" description="Polar residues" evidence="3">
    <location>
        <begin position="503"/>
        <end position="522"/>
    </location>
</feature>
<feature type="glycosylation site" description="N-linked (GlcNAc...) asparagine" evidence="2">
    <location>
        <position position="166"/>
    </location>
</feature>
<feature type="glycosylation site" description="N-linked (GlcNAc...) asparagine" evidence="2">
    <location>
        <position position="517"/>
    </location>
</feature>
<accession>Q28C60</accession>
<accession>Q5FWS1</accession>
<keyword id="KW-0012">Acyltransferase</keyword>
<keyword id="KW-0256">Endoplasmic reticulum</keyword>
<keyword id="KW-0325">Glycoprotein</keyword>
<keyword id="KW-0444">Lipid biosynthesis</keyword>
<keyword id="KW-0443">Lipid metabolism</keyword>
<keyword id="KW-0472">Membrane</keyword>
<keyword id="KW-0594">Phospholipid biosynthesis</keyword>
<keyword id="KW-1208">Phospholipid metabolism</keyword>
<keyword id="KW-1185">Reference proteome</keyword>
<keyword id="KW-0808">Transferase</keyword>
<keyword id="KW-0812">Transmembrane</keyword>
<keyword id="KW-1133">Transmembrane helix</keyword>
<gene>
    <name type="primary">lpcat4</name>
    <name type="synonym">agpat7</name>
    <name type="synonym">aytl3</name>
    <name type="ORF">TEgg023j17.1</name>
</gene>
<dbReference type="EC" id="2.3.1.23"/>
<dbReference type="EC" id="2.3.1.n6"/>
<dbReference type="EC" id="2.3.1.121"/>
<dbReference type="EC" id="2.3.1.67"/>
<dbReference type="EC" id="2.3.1.n7"/>
<dbReference type="EMBL" id="CR942439">
    <property type="protein sequence ID" value="CAJ81339.1"/>
    <property type="molecule type" value="mRNA"/>
</dbReference>
<dbReference type="EMBL" id="BC089229">
    <property type="protein sequence ID" value="AAH89229.1"/>
    <property type="molecule type" value="mRNA"/>
</dbReference>
<dbReference type="RefSeq" id="NP_001037863.1">
    <property type="nucleotide sequence ID" value="NM_001044398.1"/>
</dbReference>
<dbReference type="SMR" id="Q28C60"/>
<dbReference type="FunCoup" id="Q28C60">
    <property type="interactions" value="786"/>
</dbReference>
<dbReference type="STRING" id="8364.ENSXETP00000028188"/>
<dbReference type="GlyCosmos" id="Q28C60">
    <property type="glycosylation" value="2 sites, No reported glycans"/>
</dbReference>
<dbReference type="PaxDb" id="8364-ENSXETP00000037017"/>
<dbReference type="GeneID" id="548367"/>
<dbReference type="KEGG" id="xtr:548367"/>
<dbReference type="AGR" id="Xenbase:XB-GENE-5731127"/>
<dbReference type="CTD" id="254531"/>
<dbReference type="Xenbase" id="XB-GENE-5731127">
    <property type="gene designation" value="lpcat4"/>
</dbReference>
<dbReference type="eggNOG" id="KOG4666">
    <property type="taxonomic scope" value="Eukaryota"/>
</dbReference>
<dbReference type="InParanoid" id="Q28C60"/>
<dbReference type="OMA" id="HEYPHPF"/>
<dbReference type="OrthoDB" id="272512at2759"/>
<dbReference type="Reactome" id="R-XTR-1482788">
    <property type="pathway name" value="Acyl chain remodelling of PC"/>
</dbReference>
<dbReference type="Reactome" id="R-XTR-1482801">
    <property type="pathway name" value="Acyl chain remodelling of PS"/>
</dbReference>
<dbReference type="Reactome" id="R-XTR-1482839">
    <property type="pathway name" value="Acyl chain remodelling of PE"/>
</dbReference>
<dbReference type="Reactome" id="R-XTR-1482925">
    <property type="pathway name" value="Acyl chain remodelling of PG"/>
</dbReference>
<dbReference type="Reactome" id="R-XTR-1483166">
    <property type="pathway name" value="Synthesis of PA"/>
</dbReference>
<dbReference type="UniPathway" id="UPA00085"/>
<dbReference type="Proteomes" id="UP000008143">
    <property type="component" value="Chromosome 1"/>
</dbReference>
<dbReference type="Bgee" id="ENSXETG00000016994">
    <property type="expression patterns" value="Expressed in neurula embryo and 15 other cell types or tissues"/>
</dbReference>
<dbReference type="GO" id="GO:0005789">
    <property type="term" value="C:endoplasmic reticulum membrane"/>
    <property type="evidence" value="ECO:0007669"/>
    <property type="project" value="UniProtKB-SubCell"/>
</dbReference>
<dbReference type="GO" id="GO:0047184">
    <property type="term" value="F:1-acylglycerophosphocholine O-acyltransferase activity"/>
    <property type="evidence" value="ECO:0007669"/>
    <property type="project" value="UniProtKB-EC"/>
</dbReference>
<dbReference type="GO" id="GO:0106262">
    <property type="term" value="F:1-acylglycerophosphoethanolamine O-acyltransferase activity"/>
    <property type="evidence" value="ECO:0007669"/>
    <property type="project" value="RHEA"/>
</dbReference>
<dbReference type="GO" id="GO:0106263">
    <property type="term" value="F:1-acylglycerophosphoserine O-acyltransferase activity"/>
    <property type="evidence" value="ECO:0007669"/>
    <property type="project" value="RHEA"/>
</dbReference>
<dbReference type="GO" id="GO:0047166">
    <property type="term" value="F:1-alkenylglycerophosphoethanolamine O-acyltransferase activity"/>
    <property type="evidence" value="ECO:0007669"/>
    <property type="project" value="UniProtKB-EC"/>
</dbReference>
<dbReference type="GO" id="GO:0047192">
    <property type="term" value="F:1-alkylglycerophosphocholine O-acetyltransferase activity"/>
    <property type="evidence" value="ECO:0007669"/>
    <property type="project" value="UniProtKB-EC"/>
</dbReference>
<dbReference type="GO" id="GO:0008654">
    <property type="term" value="P:phospholipid biosynthetic process"/>
    <property type="evidence" value="ECO:0007669"/>
    <property type="project" value="UniProtKB-KW"/>
</dbReference>
<dbReference type="CDD" id="cd07991">
    <property type="entry name" value="LPLAT_LPCAT1-like"/>
    <property type="match status" value="1"/>
</dbReference>
<dbReference type="Gene3D" id="1.10.238.10">
    <property type="entry name" value="EF-hand"/>
    <property type="match status" value="1"/>
</dbReference>
<dbReference type="InterPro" id="IPR011992">
    <property type="entry name" value="EF-hand-dom_pair"/>
</dbReference>
<dbReference type="InterPro" id="IPR045252">
    <property type="entry name" value="LPCAT1-like"/>
</dbReference>
<dbReference type="InterPro" id="IPR002123">
    <property type="entry name" value="Plipid/glycerol_acylTrfase"/>
</dbReference>
<dbReference type="PANTHER" id="PTHR23063:SF7">
    <property type="entry name" value="LYSOPHOSPHOLIPID ACYLTRANSFERASE LPCAT4"/>
    <property type="match status" value="1"/>
</dbReference>
<dbReference type="PANTHER" id="PTHR23063">
    <property type="entry name" value="PHOSPHOLIPID ACYLTRANSFERASE"/>
    <property type="match status" value="1"/>
</dbReference>
<dbReference type="Pfam" id="PF01553">
    <property type="entry name" value="Acyltransferase"/>
    <property type="match status" value="1"/>
</dbReference>
<dbReference type="SMART" id="SM00563">
    <property type="entry name" value="PlsC"/>
    <property type="match status" value="1"/>
</dbReference>
<dbReference type="SUPFAM" id="SSF47473">
    <property type="entry name" value="EF-hand"/>
    <property type="match status" value="1"/>
</dbReference>
<dbReference type="SUPFAM" id="SSF69593">
    <property type="entry name" value="Glycerol-3-phosphate (1)-acyltransferase"/>
    <property type="match status" value="1"/>
</dbReference>